<feature type="chain" id="PRO_0000383742" description="Cytosolic Fe-S cluster assembly factor NAR1">
    <location>
        <begin position="1"/>
        <end position="491"/>
    </location>
</feature>
<feature type="binding site" evidence="2">
    <location>
        <position position="20"/>
    </location>
    <ligand>
        <name>[4Fe-4S] cluster</name>
        <dbReference type="ChEBI" id="CHEBI:49883"/>
        <label>1</label>
    </ligand>
</feature>
<feature type="binding site" evidence="2">
    <location>
        <position position="65"/>
    </location>
    <ligand>
        <name>[4Fe-4S] cluster</name>
        <dbReference type="ChEBI" id="CHEBI:49883"/>
        <label>1</label>
    </ligand>
</feature>
<feature type="binding site" evidence="2">
    <location>
        <position position="68"/>
    </location>
    <ligand>
        <name>[4Fe-4S] cluster</name>
        <dbReference type="ChEBI" id="CHEBI:49883"/>
        <label>1</label>
    </ligand>
</feature>
<feature type="binding site" evidence="2">
    <location>
        <position position="71"/>
    </location>
    <ligand>
        <name>[4Fe-4S] cluster</name>
        <dbReference type="ChEBI" id="CHEBI:49883"/>
        <label>1</label>
    </ligand>
</feature>
<feature type="binding site" evidence="2">
    <location>
        <position position="177"/>
    </location>
    <ligand>
        <name>[4Fe-4S] cluster</name>
        <dbReference type="ChEBI" id="CHEBI:49883"/>
        <label>2</label>
    </ligand>
</feature>
<feature type="binding site" evidence="2">
    <location>
        <position position="232"/>
    </location>
    <ligand>
        <name>[4Fe-4S] cluster</name>
        <dbReference type="ChEBI" id="CHEBI:49883"/>
        <label>2</label>
    </ligand>
</feature>
<feature type="binding site" evidence="2">
    <location>
        <position position="414"/>
    </location>
    <ligand>
        <name>[4Fe-4S] cluster</name>
        <dbReference type="ChEBI" id="CHEBI:49883"/>
        <label>2</label>
    </ligand>
</feature>
<feature type="binding site" evidence="2">
    <location>
        <position position="418"/>
    </location>
    <ligand>
        <name>[4Fe-4S] cluster</name>
        <dbReference type="ChEBI" id="CHEBI:49883"/>
        <label>2</label>
    </ligand>
</feature>
<organism>
    <name type="scientific">Yarrowia lipolytica (strain CLIB 122 / E 150)</name>
    <name type="common">Yeast</name>
    <name type="synonym">Candida lipolytica</name>
    <dbReference type="NCBI Taxonomy" id="284591"/>
    <lineage>
        <taxon>Eukaryota</taxon>
        <taxon>Fungi</taxon>
        <taxon>Dikarya</taxon>
        <taxon>Ascomycota</taxon>
        <taxon>Saccharomycotina</taxon>
        <taxon>Dipodascomycetes</taxon>
        <taxon>Dipodascales</taxon>
        <taxon>Dipodascales incertae sedis</taxon>
        <taxon>Yarrowia</taxon>
    </lineage>
</organism>
<gene>
    <name type="primary">NAR1</name>
    <name type="ordered locus">YALI0B04532g</name>
</gene>
<proteinExistence type="inferred from homology"/>
<accession>Q6CFR3</accession>
<keyword id="KW-0004">4Fe-4S</keyword>
<keyword id="KW-0408">Iron</keyword>
<keyword id="KW-0411">Iron-sulfur</keyword>
<keyword id="KW-0479">Metal-binding</keyword>
<keyword id="KW-1185">Reference proteome</keyword>
<name>NAR1_YARLI</name>
<evidence type="ECO:0000250" key="1"/>
<evidence type="ECO:0000255" key="2"/>
<evidence type="ECO:0000305" key="3"/>
<comment type="function">
    <text evidence="1">Component of the cytosolic Fe/S protein assembly machinery. Required for maturation of extramitochondrial Fe/S proteins. May play a role in the transfer of pre-assembled Fe/S clusters to target apoproteins (By similarity).</text>
</comment>
<comment type="similarity">
    <text evidence="3">Belongs to the NARF family.</text>
</comment>
<dbReference type="EMBL" id="CR382128">
    <property type="protein sequence ID" value="CAG82726.1"/>
    <property type="molecule type" value="Genomic_DNA"/>
</dbReference>
<dbReference type="RefSeq" id="XP_500499.1">
    <property type="nucleotide sequence ID" value="XM_500499.1"/>
</dbReference>
<dbReference type="SMR" id="Q6CFR3"/>
<dbReference type="FunCoup" id="Q6CFR3">
    <property type="interactions" value="382"/>
</dbReference>
<dbReference type="STRING" id="284591.Q6CFR3"/>
<dbReference type="EnsemblFungi" id="CAG82726">
    <property type="protein sequence ID" value="CAG82726"/>
    <property type="gene ID" value="YALI0_B04532g"/>
</dbReference>
<dbReference type="KEGG" id="yli:2906686"/>
<dbReference type="VEuPathDB" id="FungiDB:YALI0_B04532g"/>
<dbReference type="HOGENOM" id="CLU_018240_0_0_1"/>
<dbReference type="InParanoid" id="Q6CFR3"/>
<dbReference type="OMA" id="GYLHHVL"/>
<dbReference type="OrthoDB" id="106875at4891"/>
<dbReference type="Proteomes" id="UP000001300">
    <property type="component" value="Chromosome B"/>
</dbReference>
<dbReference type="GO" id="GO:0097361">
    <property type="term" value="C:cytosolic [4Fe-4S] assembly targeting complex"/>
    <property type="evidence" value="ECO:0000318"/>
    <property type="project" value="GO_Central"/>
</dbReference>
<dbReference type="GO" id="GO:0051539">
    <property type="term" value="F:4 iron, 4 sulfur cluster binding"/>
    <property type="evidence" value="ECO:0007669"/>
    <property type="project" value="UniProtKB-KW"/>
</dbReference>
<dbReference type="GO" id="GO:0051536">
    <property type="term" value="F:iron-sulfur cluster binding"/>
    <property type="evidence" value="ECO:0000250"/>
    <property type="project" value="UniProtKB"/>
</dbReference>
<dbReference type="GO" id="GO:0046872">
    <property type="term" value="F:metal ion binding"/>
    <property type="evidence" value="ECO:0007669"/>
    <property type="project" value="UniProtKB-KW"/>
</dbReference>
<dbReference type="GO" id="GO:0016226">
    <property type="term" value="P:iron-sulfur cluster assembly"/>
    <property type="evidence" value="ECO:0000250"/>
    <property type="project" value="UniProtKB"/>
</dbReference>
<dbReference type="Gene3D" id="3.40.50.1780">
    <property type="match status" value="1"/>
</dbReference>
<dbReference type="Gene3D" id="3.40.950.10">
    <property type="entry name" value="Fe-only Hydrogenase (Larger Subunit), Chain L, domain 3"/>
    <property type="match status" value="1"/>
</dbReference>
<dbReference type="InterPro" id="IPR050340">
    <property type="entry name" value="Cytosolic_Fe-S_CAF"/>
</dbReference>
<dbReference type="InterPro" id="IPR009016">
    <property type="entry name" value="Fe_hydrogenase"/>
</dbReference>
<dbReference type="InterPro" id="IPR004108">
    <property type="entry name" value="Fe_hydrogenase_lsu_C"/>
</dbReference>
<dbReference type="PANTHER" id="PTHR11615">
    <property type="entry name" value="NITRATE, FORMATE, IRON DEHYDROGENASE"/>
    <property type="match status" value="1"/>
</dbReference>
<dbReference type="Pfam" id="PF02906">
    <property type="entry name" value="Fe_hyd_lg_C"/>
    <property type="match status" value="1"/>
</dbReference>
<dbReference type="SUPFAM" id="SSF53920">
    <property type="entry name" value="Fe-only hydrogenase"/>
    <property type="match status" value="1"/>
</dbReference>
<reference key="1">
    <citation type="journal article" date="2004" name="Nature">
        <title>Genome evolution in yeasts.</title>
        <authorList>
            <person name="Dujon B."/>
            <person name="Sherman D."/>
            <person name="Fischer G."/>
            <person name="Durrens P."/>
            <person name="Casaregola S."/>
            <person name="Lafontaine I."/>
            <person name="de Montigny J."/>
            <person name="Marck C."/>
            <person name="Neuveglise C."/>
            <person name="Talla E."/>
            <person name="Goffard N."/>
            <person name="Frangeul L."/>
            <person name="Aigle M."/>
            <person name="Anthouard V."/>
            <person name="Babour A."/>
            <person name="Barbe V."/>
            <person name="Barnay S."/>
            <person name="Blanchin S."/>
            <person name="Beckerich J.-M."/>
            <person name="Beyne E."/>
            <person name="Bleykasten C."/>
            <person name="Boisrame A."/>
            <person name="Boyer J."/>
            <person name="Cattolico L."/>
            <person name="Confanioleri F."/>
            <person name="de Daruvar A."/>
            <person name="Despons L."/>
            <person name="Fabre E."/>
            <person name="Fairhead C."/>
            <person name="Ferry-Dumazet H."/>
            <person name="Groppi A."/>
            <person name="Hantraye F."/>
            <person name="Hennequin C."/>
            <person name="Jauniaux N."/>
            <person name="Joyet P."/>
            <person name="Kachouri R."/>
            <person name="Kerrest A."/>
            <person name="Koszul R."/>
            <person name="Lemaire M."/>
            <person name="Lesur I."/>
            <person name="Ma L."/>
            <person name="Muller H."/>
            <person name="Nicaud J.-M."/>
            <person name="Nikolski M."/>
            <person name="Oztas S."/>
            <person name="Ozier-Kalogeropoulos O."/>
            <person name="Pellenz S."/>
            <person name="Potier S."/>
            <person name="Richard G.-F."/>
            <person name="Straub M.-L."/>
            <person name="Suleau A."/>
            <person name="Swennen D."/>
            <person name="Tekaia F."/>
            <person name="Wesolowski-Louvel M."/>
            <person name="Westhof E."/>
            <person name="Wirth B."/>
            <person name="Zeniou-Meyer M."/>
            <person name="Zivanovic Y."/>
            <person name="Bolotin-Fukuhara M."/>
            <person name="Thierry A."/>
            <person name="Bouchier C."/>
            <person name="Caudron B."/>
            <person name="Scarpelli C."/>
            <person name="Gaillardin C."/>
            <person name="Weissenbach J."/>
            <person name="Wincker P."/>
            <person name="Souciet J.-L."/>
        </authorList>
    </citation>
    <scope>NUCLEOTIDE SEQUENCE [LARGE SCALE GENOMIC DNA]</scope>
    <source>
        <strain>CLIB 122 / E 150</strain>
    </source>
</reference>
<protein>
    <recommendedName>
        <fullName>Cytosolic Fe-S cluster assembly factor NAR1</fullName>
    </recommendedName>
    <alternativeName>
        <fullName>Nuclear architecture-related protein 1</fullName>
    </alternativeName>
</protein>
<sequence>MSSILSADDLNDFISPGAVCIKPIKVDKTTENAEIEIGAQGQALEVGIDGTQKELEPAQLSLSDCLACSGCITSAESVLVALQSHTQLLDELKKEAELPSGEKRIFVCSVSHQARASFAAAFGVSVEVADAKLHSLLLDTLGFDYVVGMGVGREISLIHSAQEVEKSTQKPVMAASCPGWVCYVEKTHPHVIPYLSSVKSPQQICGSLLKKVICDTRRVKPSQVYHVSVMPCFDKKLEASRDEFSVEEAGQEEKIRDVDCVITTKEVVQLLTEKDMSFGGLPEIDKSRLYTSVPETWPAERDWANHVGSSSGGYLHHVLTALRLRHDPLETRTRVDASMGKNQDVMEYSVIDTETGETVASAAQVYGFRNIQNLVRKLKPSRGKGKVVSARKSTKTVSAALNPSTYSYIEVMACPGGCINGGGQVGAPEGVAAREWKDETEKMYNSIPSEAVSEEVVDWATKVWGPHDEDKLVTAHYQEVEKVDQGLASTW</sequence>